<evidence type="ECO:0000255" key="1">
    <source>
        <dbReference type="HAMAP-Rule" id="MF_01553"/>
    </source>
</evidence>
<protein>
    <recommendedName>
        <fullName evidence="1">DNA-directed RNA polymerase subunit epsilon</fullName>
        <shortName evidence="1">RNAP epsilon subunit</shortName>
        <ecNumber evidence="1">2.7.7.6</ecNumber>
    </recommendedName>
    <alternativeName>
        <fullName evidence="1">RNA polymerase epsilon subunit</fullName>
    </alternativeName>
    <alternativeName>
        <fullName evidence="1">Transcriptase subunit epsilon</fullName>
    </alternativeName>
</protein>
<keyword id="KW-0240">DNA-directed RNA polymerase</keyword>
<keyword id="KW-0548">Nucleotidyltransferase</keyword>
<keyword id="KW-1185">Reference proteome</keyword>
<keyword id="KW-0804">Transcription</keyword>
<keyword id="KW-0808">Transferase</keyword>
<proteinExistence type="inferred from homology"/>
<reference key="1">
    <citation type="journal article" date="2006" name="Proc. Natl. Acad. Sci. U.S.A.">
        <title>Comparative genomics of the lactic acid bacteria.</title>
        <authorList>
            <person name="Makarova K.S."/>
            <person name="Slesarev A."/>
            <person name="Wolf Y.I."/>
            <person name="Sorokin A."/>
            <person name="Mirkin B."/>
            <person name="Koonin E.V."/>
            <person name="Pavlov A."/>
            <person name="Pavlova N."/>
            <person name="Karamychev V."/>
            <person name="Polouchine N."/>
            <person name="Shakhova V."/>
            <person name="Grigoriev I."/>
            <person name="Lou Y."/>
            <person name="Rohksar D."/>
            <person name="Lucas S."/>
            <person name="Huang K."/>
            <person name="Goodstein D.M."/>
            <person name="Hawkins T."/>
            <person name="Plengvidhya V."/>
            <person name="Welker D."/>
            <person name="Hughes J."/>
            <person name="Goh Y."/>
            <person name="Benson A."/>
            <person name="Baldwin K."/>
            <person name="Lee J.-H."/>
            <person name="Diaz-Muniz I."/>
            <person name="Dosti B."/>
            <person name="Smeianov V."/>
            <person name="Wechter W."/>
            <person name="Barabote R."/>
            <person name="Lorca G."/>
            <person name="Altermann E."/>
            <person name="Barrangou R."/>
            <person name="Ganesan B."/>
            <person name="Xie Y."/>
            <person name="Rawsthorne H."/>
            <person name="Tamir D."/>
            <person name="Parker C."/>
            <person name="Breidt F."/>
            <person name="Broadbent J.R."/>
            <person name="Hutkins R."/>
            <person name="O'Sullivan D."/>
            <person name="Steele J."/>
            <person name="Unlu G."/>
            <person name="Saier M.H. Jr."/>
            <person name="Klaenhammer T."/>
            <person name="Richardson P."/>
            <person name="Kozyavkin S."/>
            <person name="Weimer B.C."/>
            <person name="Mills D.A."/>
        </authorList>
    </citation>
    <scope>NUCLEOTIDE SEQUENCE [LARGE SCALE GENOMIC DNA]</scope>
    <source>
        <strain>ATCC 367 / BCRC 12310 / CIP 105137 / JCM 1170 / LMG 11437 / NCIMB 947 / NCTC 947</strain>
    </source>
</reference>
<feature type="chain" id="PRO_1000068866" description="DNA-directed RNA polymerase subunit epsilon">
    <location>
        <begin position="1"/>
        <end position="72"/>
    </location>
</feature>
<organism>
    <name type="scientific">Levilactobacillus brevis (strain ATCC 367 / BCRC 12310 / CIP 105137 / JCM 1170 / LMG 11437 / NCIMB 947 / NCTC 947)</name>
    <name type="common">Lactobacillus brevis</name>
    <dbReference type="NCBI Taxonomy" id="387344"/>
    <lineage>
        <taxon>Bacteria</taxon>
        <taxon>Bacillati</taxon>
        <taxon>Bacillota</taxon>
        <taxon>Bacilli</taxon>
        <taxon>Lactobacillales</taxon>
        <taxon>Lactobacillaceae</taxon>
        <taxon>Levilactobacillus</taxon>
    </lineage>
</organism>
<gene>
    <name evidence="1" type="primary">rpoY</name>
    <name type="ordered locus">LVIS_1413</name>
</gene>
<sequence>MIYKVYYQNDQKRNPKREDTHSLYLEAPTEVEARALVEAHTEHNIEFIEAIEGETLAYEQQNPNYKLTEFSE</sequence>
<name>RPOY_LEVBA</name>
<dbReference type="EC" id="2.7.7.6" evidence="1"/>
<dbReference type="EMBL" id="CP000416">
    <property type="protein sequence ID" value="ABJ64511.1"/>
    <property type="molecule type" value="Genomic_DNA"/>
</dbReference>
<dbReference type="RefSeq" id="WP_011668084.1">
    <property type="nucleotide sequence ID" value="NC_008497.1"/>
</dbReference>
<dbReference type="SMR" id="Q03QL1"/>
<dbReference type="STRING" id="387344.LVIS_1413"/>
<dbReference type="KEGG" id="lbr:LVIS_1413"/>
<dbReference type="eggNOG" id="COG5503">
    <property type="taxonomic scope" value="Bacteria"/>
</dbReference>
<dbReference type="HOGENOM" id="CLU_187518_0_0_9"/>
<dbReference type="Proteomes" id="UP000001652">
    <property type="component" value="Chromosome"/>
</dbReference>
<dbReference type="GO" id="GO:0000428">
    <property type="term" value="C:DNA-directed RNA polymerase complex"/>
    <property type="evidence" value="ECO:0007669"/>
    <property type="project" value="UniProtKB-KW"/>
</dbReference>
<dbReference type="GO" id="GO:0003677">
    <property type="term" value="F:DNA binding"/>
    <property type="evidence" value="ECO:0007669"/>
    <property type="project" value="UniProtKB-UniRule"/>
</dbReference>
<dbReference type="GO" id="GO:0003899">
    <property type="term" value="F:DNA-directed RNA polymerase activity"/>
    <property type="evidence" value="ECO:0007669"/>
    <property type="project" value="UniProtKB-UniRule"/>
</dbReference>
<dbReference type="GO" id="GO:0006351">
    <property type="term" value="P:DNA-templated transcription"/>
    <property type="evidence" value="ECO:0007669"/>
    <property type="project" value="UniProtKB-UniRule"/>
</dbReference>
<dbReference type="Gene3D" id="3.10.20.730">
    <property type="entry name" value="RNAP, epsilon subunit-like"/>
    <property type="match status" value="1"/>
</dbReference>
<dbReference type="HAMAP" id="MF_01553">
    <property type="entry name" value="RNApol_bact_RpoY"/>
    <property type="match status" value="1"/>
</dbReference>
<dbReference type="InterPro" id="IPR009907">
    <property type="entry name" value="RpoY"/>
</dbReference>
<dbReference type="NCBIfam" id="NF010188">
    <property type="entry name" value="PRK13667.1"/>
    <property type="match status" value="1"/>
</dbReference>
<dbReference type="Pfam" id="PF07288">
    <property type="entry name" value="RpoY"/>
    <property type="match status" value="1"/>
</dbReference>
<accession>Q03QL1</accession>
<comment type="function">
    <text evidence="1">A non-essential component of RNA polymerase (RNAP).</text>
</comment>
<comment type="catalytic activity">
    <reaction evidence="1">
        <text>RNA(n) + a ribonucleoside 5'-triphosphate = RNA(n+1) + diphosphate</text>
        <dbReference type="Rhea" id="RHEA:21248"/>
        <dbReference type="Rhea" id="RHEA-COMP:14527"/>
        <dbReference type="Rhea" id="RHEA-COMP:17342"/>
        <dbReference type="ChEBI" id="CHEBI:33019"/>
        <dbReference type="ChEBI" id="CHEBI:61557"/>
        <dbReference type="ChEBI" id="CHEBI:140395"/>
        <dbReference type="EC" id="2.7.7.6"/>
    </reaction>
</comment>
<comment type="subunit">
    <text evidence="1">RNAP is composed of a core of 2 alpha, a beta and a beta' subunit. The core is associated with a delta subunit, and at least one of epsilon or omega. When a sigma factor is associated with the core the holoenzyme is formed, which can initiate transcription.</text>
</comment>
<comment type="similarity">
    <text evidence="1">Belongs to the RNA polymerase subunit epsilon family.</text>
</comment>